<dbReference type="EMBL" id="AM933173">
    <property type="protein sequence ID" value="CAR38340.1"/>
    <property type="molecule type" value="Genomic_DNA"/>
</dbReference>
<dbReference type="RefSeq" id="WP_000383842.1">
    <property type="nucleotide sequence ID" value="NC_011274.1"/>
</dbReference>
<dbReference type="SMR" id="B5RCV4"/>
<dbReference type="KEGG" id="seg:SG2514"/>
<dbReference type="HOGENOM" id="CLU_198936_0_0_6"/>
<dbReference type="Proteomes" id="UP000008321">
    <property type="component" value="Chromosome"/>
</dbReference>
<dbReference type="GO" id="GO:0005886">
    <property type="term" value="C:plasma membrane"/>
    <property type="evidence" value="ECO:0007669"/>
    <property type="project" value="UniProtKB-SubCell"/>
</dbReference>
<dbReference type="HAMAP" id="MF_01566">
    <property type="entry name" value="UPF0370"/>
    <property type="match status" value="1"/>
</dbReference>
<dbReference type="InterPro" id="IPR020910">
    <property type="entry name" value="UPF0370"/>
</dbReference>
<dbReference type="NCBIfam" id="NF010185">
    <property type="entry name" value="PRK13664.1"/>
    <property type="match status" value="1"/>
</dbReference>
<dbReference type="Pfam" id="PF13980">
    <property type="entry name" value="UPF0370"/>
    <property type="match status" value="1"/>
</dbReference>
<reference key="1">
    <citation type="journal article" date="2008" name="Genome Res.">
        <title>Comparative genome analysis of Salmonella enteritidis PT4 and Salmonella gallinarum 287/91 provides insights into evolutionary and host adaptation pathways.</title>
        <authorList>
            <person name="Thomson N.R."/>
            <person name="Clayton D.J."/>
            <person name="Windhorst D."/>
            <person name="Vernikos G."/>
            <person name="Davidson S."/>
            <person name="Churcher C."/>
            <person name="Quail M.A."/>
            <person name="Stevens M."/>
            <person name="Jones M.A."/>
            <person name="Watson M."/>
            <person name="Barron A."/>
            <person name="Layton A."/>
            <person name="Pickard D."/>
            <person name="Kingsley R.A."/>
            <person name="Bignell A."/>
            <person name="Clark L."/>
            <person name="Harris B."/>
            <person name="Ormond D."/>
            <person name="Abdellah Z."/>
            <person name="Brooks K."/>
            <person name="Cherevach I."/>
            <person name="Chillingworth T."/>
            <person name="Woodward J."/>
            <person name="Norberczak H."/>
            <person name="Lord A."/>
            <person name="Arrowsmith C."/>
            <person name="Jagels K."/>
            <person name="Moule S."/>
            <person name="Mungall K."/>
            <person name="Saunders M."/>
            <person name="Whitehead S."/>
            <person name="Chabalgoity J.A."/>
            <person name="Maskell D."/>
            <person name="Humphreys T."/>
            <person name="Roberts M."/>
            <person name="Barrow P.A."/>
            <person name="Dougan G."/>
            <person name="Parkhill J."/>
        </authorList>
    </citation>
    <scope>NUCLEOTIDE SEQUENCE [LARGE SCALE GENOMIC DNA]</scope>
    <source>
        <strain>287/91 / NCTC 13346</strain>
    </source>
</reference>
<comment type="subcellular location">
    <subcellularLocation>
        <location evidence="1">Cell membrane</location>
        <topology evidence="1">Single-pass membrane protein</topology>
    </subcellularLocation>
</comment>
<comment type="similarity">
    <text evidence="1">Belongs to the UPF0370 family.</text>
</comment>
<feature type="chain" id="PRO_1000199730" description="UPF0370 protein YpfN">
    <location>
        <begin position="1"/>
        <end position="66"/>
    </location>
</feature>
<feature type="transmembrane region" description="Helical" evidence="1">
    <location>
        <begin position="4"/>
        <end position="24"/>
    </location>
</feature>
<feature type="region of interest" description="Disordered" evidence="2">
    <location>
        <begin position="39"/>
        <end position="66"/>
    </location>
</feature>
<feature type="compositionally biased region" description="Basic and acidic residues" evidence="2">
    <location>
        <begin position="42"/>
        <end position="51"/>
    </location>
</feature>
<keyword id="KW-1003">Cell membrane</keyword>
<keyword id="KW-0472">Membrane</keyword>
<keyword id="KW-0812">Transmembrane</keyword>
<keyword id="KW-1133">Transmembrane helix</keyword>
<organism>
    <name type="scientific">Salmonella gallinarum (strain 287/91 / NCTC 13346)</name>
    <dbReference type="NCBI Taxonomy" id="550538"/>
    <lineage>
        <taxon>Bacteria</taxon>
        <taxon>Pseudomonadati</taxon>
        <taxon>Pseudomonadota</taxon>
        <taxon>Gammaproteobacteria</taxon>
        <taxon>Enterobacterales</taxon>
        <taxon>Enterobacteriaceae</taxon>
        <taxon>Salmonella</taxon>
    </lineage>
</organism>
<gene>
    <name evidence="1" type="primary">ypfN</name>
    <name type="ordered locus">SG2514</name>
</gene>
<proteinExistence type="inferred from homology"/>
<accession>B5RCV4</accession>
<sequence length="66" mass="8114">MDWLAKYWWILVLVFLVGVLLNVIKDLKRIDHKKFLANKPELPPHRDFNDKWDDEEDWPKKDQPKK</sequence>
<protein>
    <recommendedName>
        <fullName evidence="1">UPF0370 protein YpfN</fullName>
    </recommendedName>
</protein>
<evidence type="ECO:0000255" key="1">
    <source>
        <dbReference type="HAMAP-Rule" id="MF_01566"/>
    </source>
</evidence>
<evidence type="ECO:0000256" key="2">
    <source>
        <dbReference type="SAM" id="MobiDB-lite"/>
    </source>
</evidence>
<name>YPFN_SALG2</name>